<geneLocation type="chloroplast"/>
<sequence length="82" mass="8100">MDSIISAASVIAAGLAVGLAAIGPGIGQGSAAANAVEGIARQPEVEGKIRGTLLLSLAFMESLTIYGLVVALSLLFANPYTG</sequence>
<keyword id="KW-0066">ATP synthesis</keyword>
<keyword id="KW-0138">CF(0)</keyword>
<keyword id="KW-0150">Chloroplast</keyword>
<keyword id="KW-0375">Hydrogen ion transport</keyword>
<keyword id="KW-0406">Ion transport</keyword>
<keyword id="KW-0446">Lipid-binding</keyword>
<keyword id="KW-0472">Membrane</keyword>
<keyword id="KW-0934">Plastid</keyword>
<keyword id="KW-0793">Thylakoid</keyword>
<keyword id="KW-0812">Transmembrane</keyword>
<keyword id="KW-1133">Transmembrane helix</keyword>
<keyword id="KW-0813">Transport</keyword>
<evidence type="ECO:0000255" key="1">
    <source>
        <dbReference type="HAMAP-Rule" id="MF_01396"/>
    </source>
</evidence>
<accession>Q6B8R2</accession>
<name>ATPH_GRATL</name>
<reference key="1">
    <citation type="journal article" date="2004" name="J. Mol. Evol.">
        <title>Comparative analysis of the complete plastid genome sequence of the red alga Gracilaria tenuistipitata var. liui provides insights into the evolution of rhodoplasts and their relationship to other plastids.</title>
        <authorList>
            <person name="Hagopian J.C."/>
            <person name="Reis M."/>
            <person name="Kitajima J.P."/>
            <person name="Bhattacharya D."/>
            <person name="de Oliveira M.C."/>
        </authorList>
    </citation>
    <scope>NUCLEOTIDE SEQUENCE [LARGE SCALE GENOMIC DNA]</scope>
</reference>
<organism>
    <name type="scientific">Gracilaria tenuistipitata var. liui</name>
    <name type="common">Red alga</name>
    <dbReference type="NCBI Taxonomy" id="285951"/>
    <lineage>
        <taxon>Eukaryota</taxon>
        <taxon>Rhodophyta</taxon>
        <taxon>Florideophyceae</taxon>
        <taxon>Rhodymeniophycidae</taxon>
        <taxon>Gracilariales</taxon>
        <taxon>Gracilariaceae</taxon>
        <taxon>Gracilaria</taxon>
        <taxon>Gracilaria tenuistipitata</taxon>
    </lineage>
</organism>
<feature type="chain" id="PRO_0000362974" description="ATP synthase subunit c, chloroplastic">
    <location>
        <begin position="1"/>
        <end position="82"/>
    </location>
</feature>
<feature type="transmembrane region" description="Helical" evidence="1">
    <location>
        <begin position="4"/>
        <end position="24"/>
    </location>
</feature>
<feature type="transmembrane region" description="Helical" evidence="1">
    <location>
        <begin position="57"/>
        <end position="77"/>
    </location>
</feature>
<feature type="site" description="Reversibly protonated during proton transport" evidence="1">
    <location>
        <position position="61"/>
    </location>
</feature>
<proteinExistence type="inferred from homology"/>
<dbReference type="EMBL" id="AY673996">
    <property type="protein sequence ID" value="AAT79723.1"/>
    <property type="molecule type" value="Genomic_DNA"/>
</dbReference>
<dbReference type="RefSeq" id="YP_063648.1">
    <property type="nucleotide sequence ID" value="NC_006137.1"/>
</dbReference>
<dbReference type="SMR" id="Q6B8R2"/>
<dbReference type="GeneID" id="2944094"/>
<dbReference type="GO" id="GO:0009535">
    <property type="term" value="C:chloroplast thylakoid membrane"/>
    <property type="evidence" value="ECO:0007669"/>
    <property type="project" value="UniProtKB-SubCell"/>
</dbReference>
<dbReference type="GO" id="GO:0045259">
    <property type="term" value="C:proton-transporting ATP synthase complex"/>
    <property type="evidence" value="ECO:0007669"/>
    <property type="project" value="UniProtKB-KW"/>
</dbReference>
<dbReference type="GO" id="GO:0033177">
    <property type="term" value="C:proton-transporting two-sector ATPase complex, proton-transporting domain"/>
    <property type="evidence" value="ECO:0007669"/>
    <property type="project" value="InterPro"/>
</dbReference>
<dbReference type="GO" id="GO:0008289">
    <property type="term" value="F:lipid binding"/>
    <property type="evidence" value="ECO:0007669"/>
    <property type="project" value="UniProtKB-KW"/>
</dbReference>
<dbReference type="GO" id="GO:0046933">
    <property type="term" value="F:proton-transporting ATP synthase activity, rotational mechanism"/>
    <property type="evidence" value="ECO:0007669"/>
    <property type="project" value="UniProtKB-UniRule"/>
</dbReference>
<dbReference type="CDD" id="cd18183">
    <property type="entry name" value="ATP-synt_Fo_c_ATPH"/>
    <property type="match status" value="1"/>
</dbReference>
<dbReference type="FunFam" id="1.20.20.10:FF:000001">
    <property type="entry name" value="ATP synthase subunit c, chloroplastic"/>
    <property type="match status" value="1"/>
</dbReference>
<dbReference type="Gene3D" id="1.20.20.10">
    <property type="entry name" value="F1F0 ATP synthase subunit C"/>
    <property type="match status" value="1"/>
</dbReference>
<dbReference type="HAMAP" id="MF_01396">
    <property type="entry name" value="ATP_synth_c_bact"/>
    <property type="match status" value="1"/>
</dbReference>
<dbReference type="InterPro" id="IPR005953">
    <property type="entry name" value="ATP_synth_csu_bac/chlpt"/>
</dbReference>
<dbReference type="InterPro" id="IPR000454">
    <property type="entry name" value="ATP_synth_F0_csu"/>
</dbReference>
<dbReference type="InterPro" id="IPR020537">
    <property type="entry name" value="ATP_synth_F0_csu_DDCD_BS"/>
</dbReference>
<dbReference type="InterPro" id="IPR038662">
    <property type="entry name" value="ATP_synth_F0_csu_sf"/>
</dbReference>
<dbReference type="InterPro" id="IPR002379">
    <property type="entry name" value="ATPase_proteolipid_c-like_dom"/>
</dbReference>
<dbReference type="InterPro" id="IPR035921">
    <property type="entry name" value="F/V-ATP_Csub_sf"/>
</dbReference>
<dbReference type="NCBIfam" id="TIGR01260">
    <property type="entry name" value="ATP_synt_c"/>
    <property type="match status" value="1"/>
</dbReference>
<dbReference type="NCBIfam" id="NF005608">
    <property type="entry name" value="PRK07354.1"/>
    <property type="match status" value="1"/>
</dbReference>
<dbReference type="PANTHER" id="PTHR10031">
    <property type="entry name" value="ATP SYNTHASE LIPID-BINDING PROTEIN, MITOCHONDRIAL"/>
    <property type="match status" value="1"/>
</dbReference>
<dbReference type="PANTHER" id="PTHR10031:SF0">
    <property type="entry name" value="ATPASE PROTEIN 9"/>
    <property type="match status" value="1"/>
</dbReference>
<dbReference type="Pfam" id="PF00137">
    <property type="entry name" value="ATP-synt_C"/>
    <property type="match status" value="1"/>
</dbReference>
<dbReference type="PRINTS" id="PR00124">
    <property type="entry name" value="ATPASEC"/>
</dbReference>
<dbReference type="SUPFAM" id="SSF81333">
    <property type="entry name" value="F1F0 ATP synthase subunit C"/>
    <property type="match status" value="1"/>
</dbReference>
<dbReference type="PROSITE" id="PS00605">
    <property type="entry name" value="ATPASE_C"/>
    <property type="match status" value="1"/>
</dbReference>
<protein>
    <recommendedName>
        <fullName evidence="1">ATP synthase subunit c, chloroplastic</fullName>
    </recommendedName>
    <alternativeName>
        <fullName evidence="1">ATP synthase F(0) sector subunit c</fullName>
    </alternativeName>
    <alternativeName>
        <fullName evidence="1">ATPase subunit III</fullName>
    </alternativeName>
    <alternativeName>
        <fullName evidence="1">F-type ATPase subunit c</fullName>
        <shortName evidence="1">F-ATPase subunit c</shortName>
    </alternativeName>
    <alternativeName>
        <fullName evidence="1">Lipid-binding protein</fullName>
    </alternativeName>
</protein>
<comment type="function">
    <text evidence="1">F(1)F(0) ATP synthase produces ATP from ADP in the presence of a proton or sodium gradient. F-type ATPases consist of two structural domains, F(1) containing the extramembraneous catalytic core and F(0) containing the membrane proton channel, linked together by a central stalk and a peripheral stalk. During catalysis, ATP synthesis in the catalytic domain of F(1) is coupled via a rotary mechanism of the central stalk subunits to proton translocation.</text>
</comment>
<comment type="function">
    <text evidence="1">Key component of the F(0) channel; it plays a direct role in translocation across the membrane. A homomeric c-ring of between 10-14 subunits forms the central stalk rotor element with the F(1) delta and epsilon subunits.</text>
</comment>
<comment type="subunit">
    <text evidence="1">F-type ATPases have 2 components, F(1) - the catalytic core - and F(0) - the membrane proton channel. F(1) has five subunits: alpha(3), beta(3), gamma(1), delta(1), epsilon(1). F(0) has four main subunits: a(1), b(1), b'(1) and c(10-14). The alpha and beta chains form an alternating ring which encloses part of the gamma chain. F(1) is attached to F(0) by a central stalk formed by the gamma and epsilon chains, while a peripheral stalk is formed by the delta, b and b' chains.</text>
</comment>
<comment type="subcellular location">
    <subcellularLocation>
        <location evidence="1">Plastid</location>
        <location evidence="1">Chloroplast thylakoid membrane</location>
        <topology evidence="1">Multi-pass membrane protein</topology>
    </subcellularLocation>
</comment>
<comment type="miscellaneous">
    <text>In plastids the F-type ATPase is also known as CF(1)CF(0).</text>
</comment>
<comment type="similarity">
    <text evidence="1">Belongs to the ATPase C chain family.</text>
</comment>
<gene>
    <name evidence="1" type="primary">atpH</name>
    <name type="ordered locus">Grc000142</name>
</gene>